<gene>
    <name type="ordered locus">MJ1518</name>
</gene>
<proteinExistence type="predicted"/>
<dbReference type="EMBL" id="L77117">
    <property type="protein sequence ID" value="AAB99549.1"/>
    <property type="molecule type" value="Genomic_DNA"/>
</dbReference>
<dbReference type="PIR" id="E64489">
    <property type="entry name" value="E64489"/>
</dbReference>
<dbReference type="RefSeq" id="WP_010871042.1">
    <property type="nucleotide sequence ID" value="NC_000909.1"/>
</dbReference>
<dbReference type="STRING" id="243232.MJ_1518"/>
<dbReference type="PaxDb" id="243232-MJ_1518"/>
<dbReference type="EnsemblBacteria" id="AAB99549">
    <property type="protein sequence ID" value="AAB99549"/>
    <property type="gene ID" value="MJ_1518"/>
</dbReference>
<dbReference type="GeneID" id="1452426"/>
<dbReference type="KEGG" id="mja:MJ_1518"/>
<dbReference type="HOGENOM" id="CLU_738912_0_0_2"/>
<dbReference type="InParanoid" id="Q58913"/>
<dbReference type="PhylomeDB" id="Q58913"/>
<dbReference type="Proteomes" id="UP000000805">
    <property type="component" value="Chromosome"/>
</dbReference>
<accession>Q58913</accession>
<feature type="chain" id="PRO_0000107390" description="Uncharacterized protein MJ1518">
    <location>
        <begin position="1"/>
        <end position="374"/>
    </location>
</feature>
<name>Y1518_METJA</name>
<protein>
    <recommendedName>
        <fullName>Uncharacterized protein MJ1518</fullName>
    </recommendedName>
</protein>
<keyword id="KW-1185">Reference proteome</keyword>
<reference key="1">
    <citation type="journal article" date="1996" name="Science">
        <title>Complete genome sequence of the methanogenic archaeon, Methanococcus jannaschii.</title>
        <authorList>
            <person name="Bult C.J."/>
            <person name="White O."/>
            <person name="Olsen G.J."/>
            <person name="Zhou L."/>
            <person name="Fleischmann R.D."/>
            <person name="Sutton G.G."/>
            <person name="Blake J.A."/>
            <person name="FitzGerald L.M."/>
            <person name="Clayton R.A."/>
            <person name="Gocayne J.D."/>
            <person name="Kerlavage A.R."/>
            <person name="Dougherty B.A."/>
            <person name="Tomb J.-F."/>
            <person name="Adams M.D."/>
            <person name="Reich C.I."/>
            <person name="Overbeek R."/>
            <person name="Kirkness E.F."/>
            <person name="Weinstock K.G."/>
            <person name="Merrick J.M."/>
            <person name="Glodek A."/>
            <person name="Scott J.L."/>
            <person name="Geoghagen N.S.M."/>
            <person name="Weidman J.F."/>
            <person name="Fuhrmann J.L."/>
            <person name="Nguyen D."/>
            <person name="Utterback T.R."/>
            <person name="Kelley J.M."/>
            <person name="Peterson J.D."/>
            <person name="Sadow P.W."/>
            <person name="Hanna M.C."/>
            <person name="Cotton M.D."/>
            <person name="Roberts K.M."/>
            <person name="Hurst M.A."/>
            <person name="Kaine B.P."/>
            <person name="Borodovsky M."/>
            <person name="Klenk H.-P."/>
            <person name="Fraser C.M."/>
            <person name="Smith H.O."/>
            <person name="Woese C.R."/>
            <person name="Venter J.C."/>
        </authorList>
    </citation>
    <scope>NUCLEOTIDE SEQUENCE [LARGE SCALE GENOMIC DNA]</scope>
    <source>
        <strain>ATCC 43067 / DSM 2661 / JAL-1 / JCM 10045 / NBRC 100440</strain>
    </source>
</reference>
<sequence length="374" mass="44817">MLSIIFGSKPREDEIDSVDRYMTKLFLRIIFIPDYTNKIHDLSENVSKNIKNLIMELKSGNIFEINKILDDLEYNIYTIDDESLTIKERVYNAVEIIFKVVSNEILRTESIDDKELEIIKKLHELVVLTDKVLRITYNSLNRSLEDINSYRRIIANNNLPDDIIRRLNIINAYIEKIKSDILSMRENEQRVLIICLSKFYNLYLSKDKKEREKLADEIKNLIEYLYFDWYYDFIDNIGEYEFKFIKNIAAMCLLYDYTKELEKDGSKEMFNHVIFKILRNGGFKVKEYDIIETLLNIRENLPKSSKIDVRYFDKELIKIIRGIVRESKKDVFYNNMKRLKEFVEELREMEKKLSEANNITLHDLRKLGFNDMFL</sequence>
<organism>
    <name type="scientific">Methanocaldococcus jannaschii (strain ATCC 43067 / DSM 2661 / JAL-1 / JCM 10045 / NBRC 100440)</name>
    <name type="common">Methanococcus jannaschii</name>
    <dbReference type="NCBI Taxonomy" id="243232"/>
    <lineage>
        <taxon>Archaea</taxon>
        <taxon>Methanobacteriati</taxon>
        <taxon>Methanobacteriota</taxon>
        <taxon>Methanomada group</taxon>
        <taxon>Methanococci</taxon>
        <taxon>Methanococcales</taxon>
        <taxon>Methanocaldococcaceae</taxon>
        <taxon>Methanocaldococcus</taxon>
    </lineage>
</organism>